<evidence type="ECO:0000255" key="1">
    <source>
        <dbReference type="HAMAP-Rule" id="MF_01358"/>
    </source>
</evidence>
<accession>Q3M880</accession>
<gene>
    <name evidence="1" type="primary">ndhH</name>
    <name type="ordered locus">Ava_3198</name>
</gene>
<proteinExistence type="inferred from homology"/>
<dbReference type="EC" id="7.1.1.-" evidence="1"/>
<dbReference type="EMBL" id="CP000117">
    <property type="protein sequence ID" value="ABA22806.1"/>
    <property type="molecule type" value="Genomic_DNA"/>
</dbReference>
<dbReference type="SMR" id="Q3M880"/>
<dbReference type="STRING" id="240292.Ava_3198"/>
<dbReference type="KEGG" id="ava:Ava_3198"/>
<dbReference type="eggNOG" id="COG0649">
    <property type="taxonomic scope" value="Bacteria"/>
</dbReference>
<dbReference type="HOGENOM" id="CLU_015134_1_2_3"/>
<dbReference type="Proteomes" id="UP000002533">
    <property type="component" value="Chromosome"/>
</dbReference>
<dbReference type="GO" id="GO:0031676">
    <property type="term" value="C:plasma membrane-derived thylakoid membrane"/>
    <property type="evidence" value="ECO:0007669"/>
    <property type="project" value="UniProtKB-SubCell"/>
</dbReference>
<dbReference type="GO" id="GO:0051287">
    <property type="term" value="F:NAD binding"/>
    <property type="evidence" value="ECO:0007669"/>
    <property type="project" value="InterPro"/>
</dbReference>
<dbReference type="GO" id="GO:0016655">
    <property type="term" value="F:oxidoreductase activity, acting on NAD(P)H, quinone or similar compound as acceptor"/>
    <property type="evidence" value="ECO:0007669"/>
    <property type="project" value="UniProtKB-UniRule"/>
</dbReference>
<dbReference type="GO" id="GO:0048038">
    <property type="term" value="F:quinone binding"/>
    <property type="evidence" value="ECO:0007669"/>
    <property type="project" value="UniProtKB-KW"/>
</dbReference>
<dbReference type="GO" id="GO:0019684">
    <property type="term" value="P:photosynthesis, light reaction"/>
    <property type="evidence" value="ECO:0007669"/>
    <property type="project" value="UniProtKB-UniRule"/>
</dbReference>
<dbReference type="Gene3D" id="1.10.645.10">
    <property type="entry name" value="Cytochrome-c3 Hydrogenase, chain B"/>
    <property type="match status" value="1"/>
</dbReference>
<dbReference type="HAMAP" id="MF_01358">
    <property type="entry name" value="NDH1_NuoD"/>
    <property type="match status" value="1"/>
</dbReference>
<dbReference type="InterPro" id="IPR001135">
    <property type="entry name" value="NADH_Q_OxRdtase_suD"/>
</dbReference>
<dbReference type="InterPro" id="IPR014029">
    <property type="entry name" value="NADH_UbQ_OxRdtase_49kDa_CS"/>
</dbReference>
<dbReference type="InterPro" id="IPR022885">
    <property type="entry name" value="NDH1_su_D/H"/>
</dbReference>
<dbReference type="InterPro" id="IPR029014">
    <property type="entry name" value="NiFe-Hase_large"/>
</dbReference>
<dbReference type="NCBIfam" id="TIGR01962">
    <property type="entry name" value="NuoD"/>
    <property type="match status" value="1"/>
</dbReference>
<dbReference type="NCBIfam" id="NF004739">
    <property type="entry name" value="PRK06075.1"/>
    <property type="match status" value="1"/>
</dbReference>
<dbReference type="NCBIfam" id="NF005649">
    <property type="entry name" value="PRK07415.1"/>
    <property type="match status" value="1"/>
</dbReference>
<dbReference type="PANTHER" id="PTHR11993:SF10">
    <property type="entry name" value="NADH DEHYDROGENASE [UBIQUINONE] IRON-SULFUR PROTEIN 2, MITOCHONDRIAL"/>
    <property type="match status" value="1"/>
</dbReference>
<dbReference type="PANTHER" id="PTHR11993">
    <property type="entry name" value="NADH-UBIQUINONE OXIDOREDUCTASE 49 KDA SUBUNIT"/>
    <property type="match status" value="1"/>
</dbReference>
<dbReference type="Pfam" id="PF00346">
    <property type="entry name" value="Complex1_49kDa"/>
    <property type="match status" value="1"/>
</dbReference>
<dbReference type="SUPFAM" id="SSF56762">
    <property type="entry name" value="HydB/Nqo4-like"/>
    <property type="match status" value="1"/>
</dbReference>
<dbReference type="PROSITE" id="PS00535">
    <property type="entry name" value="COMPLEX1_49K"/>
    <property type="match status" value="1"/>
</dbReference>
<name>NDHH_TRIV2</name>
<organism>
    <name type="scientific">Trichormus variabilis (strain ATCC 29413 / PCC 7937)</name>
    <name type="common">Anabaena variabilis</name>
    <dbReference type="NCBI Taxonomy" id="240292"/>
    <lineage>
        <taxon>Bacteria</taxon>
        <taxon>Bacillati</taxon>
        <taxon>Cyanobacteriota</taxon>
        <taxon>Cyanophyceae</taxon>
        <taxon>Nostocales</taxon>
        <taxon>Nostocaceae</taxon>
        <taxon>Trichormus</taxon>
    </lineage>
</organism>
<comment type="function">
    <text evidence="1">NDH-1 shuttles electrons from an unknown electron donor, via FMN and iron-sulfur (Fe-S) centers, to quinones in the respiratory and/or the photosynthetic chain. The immediate electron acceptor for the enzyme in this species is believed to be plastoquinone. Couples the redox reaction to proton translocation, and thus conserves the redox energy in a proton gradient. Cyanobacterial NDH-1 also plays a role in inorganic carbon-concentration.</text>
</comment>
<comment type="catalytic activity">
    <reaction evidence="1">
        <text>a plastoquinone + NADH + (n+1) H(+)(in) = a plastoquinol + NAD(+) + n H(+)(out)</text>
        <dbReference type="Rhea" id="RHEA:42608"/>
        <dbReference type="Rhea" id="RHEA-COMP:9561"/>
        <dbReference type="Rhea" id="RHEA-COMP:9562"/>
        <dbReference type="ChEBI" id="CHEBI:15378"/>
        <dbReference type="ChEBI" id="CHEBI:17757"/>
        <dbReference type="ChEBI" id="CHEBI:57540"/>
        <dbReference type="ChEBI" id="CHEBI:57945"/>
        <dbReference type="ChEBI" id="CHEBI:62192"/>
    </reaction>
</comment>
<comment type="catalytic activity">
    <reaction evidence="1">
        <text>a plastoquinone + NADPH + (n+1) H(+)(in) = a plastoquinol + NADP(+) + n H(+)(out)</text>
        <dbReference type="Rhea" id="RHEA:42612"/>
        <dbReference type="Rhea" id="RHEA-COMP:9561"/>
        <dbReference type="Rhea" id="RHEA-COMP:9562"/>
        <dbReference type="ChEBI" id="CHEBI:15378"/>
        <dbReference type="ChEBI" id="CHEBI:17757"/>
        <dbReference type="ChEBI" id="CHEBI:57783"/>
        <dbReference type="ChEBI" id="CHEBI:58349"/>
        <dbReference type="ChEBI" id="CHEBI:62192"/>
    </reaction>
</comment>
<comment type="subunit">
    <text evidence="1">NDH-1 can be composed of about 15 different subunits; different subcomplexes with different compositions have been identified which probably have different functions.</text>
</comment>
<comment type="subcellular location">
    <subcellularLocation>
        <location evidence="1">Cellular thylakoid membrane</location>
        <topology evidence="1">Peripheral membrane protein</topology>
        <orientation evidence="1">Cytoplasmic side</orientation>
    </subcellularLocation>
</comment>
<comment type="similarity">
    <text evidence="1">Belongs to the complex I 49 kDa subunit family.</text>
</comment>
<protein>
    <recommendedName>
        <fullName evidence="1">NAD(P)H-quinone oxidoreductase subunit H</fullName>
        <ecNumber evidence="1">7.1.1.-</ecNumber>
    </recommendedName>
    <alternativeName>
        <fullName>NAD(P)H dehydrogenase subunit H</fullName>
    </alternativeName>
    <alternativeName>
        <fullName evidence="1">NADH-plastoquinone oxidoreductase subunit H</fullName>
    </alternativeName>
    <alternativeName>
        <fullName evidence="1">NDH-1 subunit H</fullName>
        <shortName evidence="1">NDH-H</shortName>
    </alternativeName>
</protein>
<reference key="1">
    <citation type="journal article" date="2014" name="Stand. Genomic Sci.">
        <title>Complete genome sequence of Anabaena variabilis ATCC 29413.</title>
        <authorList>
            <person name="Thiel T."/>
            <person name="Pratte B.S."/>
            <person name="Zhong J."/>
            <person name="Goodwin L."/>
            <person name="Copeland A."/>
            <person name="Lucas S."/>
            <person name="Han C."/>
            <person name="Pitluck S."/>
            <person name="Land M.L."/>
            <person name="Kyrpides N.C."/>
            <person name="Woyke T."/>
        </authorList>
    </citation>
    <scope>NUCLEOTIDE SEQUENCE [LARGE SCALE GENOMIC DNA]</scope>
    <source>
        <strain>ATCC 29413 / PCC 7937</strain>
    </source>
</reference>
<feature type="chain" id="PRO_0000371815" description="NAD(P)H-quinone oxidoreductase subunit H">
    <location>
        <begin position="1"/>
        <end position="394"/>
    </location>
</feature>
<keyword id="KW-0472">Membrane</keyword>
<keyword id="KW-0520">NAD</keyword>
<keyword id="KW-0521">NADP</keyword>
<keyword id="KW-0618">Plastoquinone</keyword>
<keyword id="KW-0874">Quinone</keyword>
<keyword id="KW-0793">Thylakoid</keyword>
<keyword id="KW-1278">Translocase</keyword>
<keyword id="KW-0813">Transport</keyword>
<sequence>MARIETRTEPMVLNMGPHHPSMHGVLRLIVTLDGEDVVDCEPVIGYLHRGMEKIAENRTTVMYVPYVSRWDYAAGMFNEAVTVNAPEKLAGVAVPKRASYIRVIMLELNRIANHLLWFGPFLADVGAQTPFFYQFREREMIYDLWEAATGYRMVNNNYFRVGGVAADLPYGWVDKCLEFCDYFLPVVDEYEKLVTNNPIFRRRIEGIGTISREEAINWGLSGPMLRASGVKWDLRKVDHYESYDDFDWDVQWETAGDCLARYTVRMREMRESVKIIKQAIKGLPGGPYENLEAKRLIAGKKSEWDAFDYQYIGKKVSPTFKMPKGEIYARVESGKGELGIYLIGDDNVFPWRWKIRPADFNNLQILPHLLRGMKVADIVVILGSIDVIMGSVDR</sequence>